<dbReference type="EMBL" id="AF355465">
    <property type="protein sequence ID" value="AAK83287.1"/>
    <property type="molecule type" value="mRNA"/>
</dbReference>
<dbReference type="EMBL" id="AY037945">
    <property type="protein sequence ID" value="AAK71491.1"/>
    <property type="molecule type" value="mRNA"/>
</dbReference>
<dbReference type="EMBL" id="AK022358">
    <property type="protein sequence ID" value="BAB14020.1"/>
    <property type="molecule type" value="mRNA"/>
</dbReference>
<dbReference type="EMBL" id="AK122768">
    <property type="protein sequence ID" value="BAG53718.1"/>
    <property type="molecule type" value="mRNA"/>
</dbReference>
<dbReference type="EMBL" id="AC117456">
    <property type="status" value="NOT_ANNOTATED_CDS"/>
    <property type="molecule type" value="Genomic_DNA"/>
</dbReference>
<dbReference type="EMBL" id="CH471052">
    <property type="protein sequence ID" value="EAW78424.1"/>
    <property type="molecule type" value="Genomic_DNA"/>
</dbReference>
<dbReference type="EMBL" id="CH471052">
    <property type="protein sequence ID" value="EAW78426.1"/>
    <property type="molecule type" value="Genomic_DNA"/>
</dbReference>
<dbReference type="EMBL" id="CH471052">
    <property type="protein sequence ID" value="EAW78425.1"/>
    <property type="molecule type" value="Genomic_DNA"/>
</dbReference>
<dbReference type="EMBL" id="BC002896">
    <property type="protein sequence ID" value="AAH02896.1"/>
    <property type="molecule type" value="mRNA"/>
</dbReference>
<dbReference type="CCDS" id="CCDS3224.1">
    <molecule id="Q9HA38-1"/>
</dbReference>
<dbReference type="CCDS" id="CCDS46962.1">
    <molecule id="Q9HA38-2"/>
</dbReference>
<dbReference type="RefSeq" id="NP_001362753.1">
    <molecule id="Q9HA38-1"/>
    <property type="nucleotide sequence ID" value="NM_001375824.1"/>
</dbReference>
<dbReference type="RefSeq" id="NP_001362754.1">
    <molecule id="Q9HA38-1"/>
    <property type="nucleotide sequence ID" value="NM_001375825.1"/>
</dbReference>
<dbReference type="RefSeq" id="NP_001362755.1">
    <molecule id="Q9HA38-2"/>
    <property type="nucleotide sequence ID" value="NM_001375826.1"/>
</dbReference>
<dbReference type="RefSeq" id="NP_001362756.1">
    <molecule id="Q9HA38-2"/>
    <property type="nucleotide sequence ID" value="NM_001375827.1"/>
</dbReference>
<dbReference type="RefSeq" id="NP_001362757.1">
    <molecule id="Q9HA38-2"/>
    <property type="nucleotide sequence ID" value="NM_001375828.1"/>
</dbReference>
<dbReference type="RefSeq" id="NP_001362758.1">
    <molecule id="Q9HA38-2"/>
    <property type="nucleotide sequence ID" value="NM_001375829.1"/>
</dbReference>
<dbReference type="RefSeq" id="NP_071915.1">
    <molecule id="Q9HA38-1"/>
    <property type="nucleotide sequence ID" value="NM_022470.4"/>
</dbReference>
<dbReference type="RefSeq" id="NP_689426.1">
    <molecule id="Q9HA38-2"/>
    <property type="nucleotide sequence ID" value="NM_152240.3"/>
</dbReference>
<dbReference type="RefSeq" id="XP_005247763.1">
    <property type="nucleotide sequence ID" value="XM_005247706.2"/>
</dbReference>
<dbReference type="RefSeq" id="XP_011511375.1">
    <molecule id="Q9HA38-1"/>
    <property type="nucleotide sequence ID" value="XM_011513073.3"/>
</dbReference>
<dbReference type="RefSeq" id="XP_054203517.1">
    <molecule id="Q9HA38-1"/>
    <property type="nucleotide sequence ID" value="XM_054347542.1"/>
</dbReference>
<dbReference type="SMR" id="Q9HA38"/>
<dbReference type="BioGRID" id="122151">
    <property type="interactions" value="31"/>
</dbReference>
<dbReference type="FunCoup" id="Q9HA38">
    <property type="interactions" value="631"/>
</dbReference>
<dbReference type="IntAct" id="Q9HA38">
    <property type="interactions" value="23"/>
</dbReference>
<dbReference type="MINT" id="Q9HA38"/>
<dbReference type="STRING" id="9606.ENSP00000311221"/>
<dbReference type="GlyGen" id="Q9HA38">
    <property type="glycosylation" value="1 site"/>
</dbReference>
<dbReference type="iPTMnet" id="Q9HA38"/>
<dbReference type="PhosphoSitePlus" id="Q9HA38"/>
<dbReference type="BioMuta" id="ZMAT3"/>
<dbReference type="DMDM" id="74734128"/>
<dbReference type="jPOST" id="Q9HA38"/>
<dbReference type="MassIVE" id="Q9HA38"/>
<dbReference type="PaxDb" id="9606-ENSP00000311221"/>
<dbReference type="PeptideAtlas" id="Q9HA38"/>
<dbReference type="ProteomicsDB" id="81372">
    <molecule id="Q9HA38-1"/>
</dbReference>
<dbReference type="ProteomicsDB" id="81373">
    <molecule id="Q9HA38-2"/>
</dbReference>
<dbReference type="Pumba" id="Q9HA38"/>
<dbReference type="Antibodypedia" id="18760">
    <property type="antibodies" value="191 antibodies from 31 providers"/>
</dbReference>
<dbReference type="DNASU" id="64393"/>
<dbReference type="Ensembl" id="ENST00000311417.7">
    <molecule id="Q9HA38-1"/>
    <property type="protein sequence ID" value="ENSP00000311221.2"/>
    <property type="gene ID" value="ENSG00000172667.11"/>
</dbReference>
<dbReference type="Ensembl" id="ENST00000432729.5">
    <molecule id="Q9HA38-2"/>
    <property type="protein sequence ID" value="ENSP00000396506.1"/>
    <property type="gene ID" value="ENSG00000172667.11"/>
</dbReference>
<dbReference type="GeneID" id="64393"/>
<dbReference type="KEGG" id="hsa:64393"/>
<dbReference type="MANE-Select" id="ENST00000311417.7">
    <property type="protein sequence ID" value="ENSP00000311221.2"/>
    <property type="RefSeq nucleotide sequence ID" value="NM_022470.4"/>
    <property type="RefSeq protein sequence ID" value="NP_071915.1"/>
</dbReference>
<dbReference type="UCSC" id="uc003fjg.5">
    <molecule id="Q9HA38-1"/>
    <property type="organism name" value="human"/>
</dbReference>
<dbReference type="AGR" id="HGNC:29983"/>
<dbReference type="CTD" id="64393"/>
<dbReference type="DisGeNET" id="64393"/>
<dbReference type="GeneCards" id="ZMAT3"/>
<dbReference type="HGNC" id="HGNC:29983">
    <property type="gene designation" value="ZMAT3"/>
</dbReference>
<dbReference type="HPA" id="ENSG00000172667">
    <property type="expression patterns" value="Low tissue specificity"/>
</dbReference>
<dbReference type="MalaCards" id="ZMAT3"/>
<dbReference type="MIM" id="606452">
    <property type="type" value="gene"/>
</dbReference>
<dbReference type="neXtProt" id="NX_Q9HA38"/>
<dbReference type="OpenTargets" id="ENSG00000172667"/>
<dbReference type="PharmGKB" id="PA145147560"/>
<dbReference type="VEuPathDB" id="HostDB:ENSG00000172667"/>
<dbReference type="eggNOG" id="ENOG502QW4K">
    <property type="taxonomic scope" value="Eukaryota"/>
</dbReference>
<dbReference type="GeneTree" id="ENSGT00730000111202"/>
<dbReference type="HOGENOM" id="CLU_051920_1_0_1"/>
<dbReference type="InParanoid" id="Q9HA38"/>
<dbReference type="OMA" id="YRGKNHA"/>
<dbReference type="OrthoDB" id="434647at2759"/>
<dbReference type="PAN-GO" id="Q9HA38">
    <property type="GO annotations" value="0 GO annotations based on evolutionary models"/>
</dbReference>
<dbReference type="PhylomeDB" id="Q9HA38"/>
<dbReference type="TreeFam" id="TF350019"/>
<dbReference type="PathwayCommons" id="Q9HA38"/>
<dbReference type="SignaLink" id="Q9HA38"/>
<dbReference type="BioGRID-ORCS" id="64393">
    <property type="hits" value="15 hits in 1167 CRISPR screens"/>
</dbReference>
<dbReference type="CD-CODE" id="91857CE7">
    <property type="entry name" value="Nucleolus"/>
</dbReference>
<dbReference type="ChiTaRS" id="ZMAT3">
    <property type="organism name" value="human"/>
</dbReference>
<dbReference type="GenomeRNAi" id="64393"/>
<dbReference type="Pharos" id="Q9HA38">
    <property type="development level" value="Tbio"/>
</dbReference>
<dbReference type="PRO" id="PR:Q9HA38"/>
<dbReference type="Proteomes" id="UP000005640">
    <property type="component" value="Chromosome 3"/>
</dbReference>
<dbReference type="RNAct" id="Q9HA38">
    <property type="molecule type" value="protein"/>
</dbReference>
<dbReference type="Bgee" id="ENSG00000172667">
    <property type="expression patterns" value="Expressed in postcentral gyrus and 194 other cell types or tissues"/>
</dbReference>
<dbReference type="ExpressionAtlas" id="Q9HA38">
    <property type="expression patterns" value="baseline and differential"/>
</dbReference>
<dbReference type="GO" id="GO:0005730">
    <property type="term" value="C:nucleolus"/>
    <property type="evidence" value="ECO:0007669"/>
    <property type="project" value="UniProtKB-SubCell"/>
</dbReference>
<dbReference type="GO" id="GO:0005654">
    <property type="term" value="C:nucleoplasm"/>
    <property type="evidence" value="ECO:0000314"/>
    <property type="project" value="HPA"/>
</dbReference>
<dbReference type="GO" id="GO:0005886">
    <property type="term" value="C:plasma membrane"/>
    <property type="evidence" value="ECO:0000314"/>
    <property type="project" value="HPA"/>
</dbReference>
<dbReference type="GO" id="GO:0003723">
    <property type="term" value="F:RNA binding"/>
    <property type="evidence" value="ECO:0007005"/>
    <property type="project" value="UniProtKB"/>
</dbReference>
<dbReference type="GO" id="GO:0008270">
    <property type="term" value="F:zinc ion binding"/>
    <property type="evidence" value="ECO:0007669"/>
    <property type="project" value="UniProtKB-KW"/>
</dbReference>
<dbReference type="GO" id="GO:0006915">
    <property type="term" value="P:apoptotic process"/>
    <property type="evidence" value="ECO:0007669"/>
    <property type="project" value="UniProtKB-KW"/>
</dbReference>
<dbReference type="GO" id="GO:0006974">
    <property type="term" value="P:DNA damage response"/>
    <property type="evidence" value="ECO:0007669"/>
    <property type="project" value="UniProtKB-KW"/>
</dbReference>
<dbReference type="GO" id="GO:0015031">
    <property type="term" value="P:protein transport"/>
    <property type="evidence" value="ECO:0007669"/>
    <property type="project" value="UniProtKB-KW"/>
</dbReference>
<dbReference type="FunFam" id="3.30.160.60:FF:000285">
    <property type="entry name" value="Zinc finger matrin-type protein 3"/>
    <property type="match status" value="2"/>
</dbReference>
<dbReference type="FunFam" id="3.30.160.60:FF:000612">
    <property type="entry name" value="Zinc finger matrin-type protein 3"/>
    <property type="match status" value="1"/>
</dbReference>
<dbReference type="Gene3D" id="3.30.160.60">
    <property type="entry name" value="Classic Zinc Finger"/>
    <property type="match status" value="3"/>
</dbReference>
<dbReference type="InterPro" id="IPR003604">
    <property type="entry name" value="Matrin/U1-like-C_Znf_C2H2"/>
</dbReference>
<dbReference type="InterPro" id="IPR052644">
    <property type="entry name" value="ZMAT3"/>
</dbReference>
<dbReference type="InterPro" id="IPR022755">
    <property type="entry name" value="Znf_C2H2_jaz"/>
</dbReference>
<dbReference type="InterPro" id="IPR036236">
    <property type="entry name" value="Znf_C2H2_sf"/>
</dbReference>
<dbReference type="InterPro" id="IPR013087">
    <property type="entry name" value="Znf_C2H2_type"/>
</dbReference>
<dbReference type="PANTHER" id="PTHR46786">
    <property type="entry name" value="ZINC FINGER MATRIN-TYPE PROTEIN 3"/>
    <property type="match status" value="1"/>
</dbReference>
<dbReference type="PANTHER" id="PTHR46786:SF1">
    <property type="entry name" value="ZINC FINGER MATRIN-TYPE PROTEIN 3"/>
    <property type="match status" value="1"/>
</dbReference>
<dbReference type="Pfam" id="PF12171">
    <property type="entry name" value="zf-C2H2_jaz"/>
    <property type="match status" value="1"/>
</dbReference>
<dbReference type="Pfam" id="PF12874">
    <property type="entry name" value="zf-met"/>
    <property type="match status" value="2"/>
</dbReference>
<dbReference type="SMART" id="SM00355">
    <property type="entry name" value="ZnF_C2H2"/>
    <property type="match status" value="3"/>
</dbReference>
<dbReference type="SMART" id="SM00451">
    <property type="entry name" value="ZnF_U1"/>
    <property type="match status" value="3"/>
</dbReference>
<dbReference type="SUPFAM" id="SSF57667">
    <property type="entry name" value="beta-beta-alpha zinc fingers"/>
    <property type="match status" value="3"/>
</dbReference>
<comment type="function">
    <text evidence="3">Acts as a bona fide target gene of p53/TP53. May play a role in the TP53-dependent growth regulatory pathway. May contribute to TP53-mediated apoptosis by regulation of TP53 expression and translocation to the nucleus and nucleolus.</text>
</comment>
<comment type="subunit">
    <text evidence="5">Interacts with dsRNA.</text>
</comment>
<comment type="interaction">
    <interactant intactId="EBI-2548480">
        <id>Q9HA38</id>
    </interactant>
    <interactant intactId="EBI-528269">
        <id>Q9UKV8</id>
        <label>AGO2</label>
    </interactant>
    <organismsDiffer>false</organismsDiffer>
    <experiments>5</experiments>
</comment>
<comment type="interaction">
    <interactant intactId="EBI-2548480">
        <id>Q9HA38</id>
    </interactant>
    <interactant intactId="EBI-352022">
        <id>Q08211</id>
        <label>DHX9</label>
    </interactant>
    <organismsDiffer>false</organismsDiffer>
    <experiments>3</experiments>
</comment>
<comment type="interaction">
    <interactant intactId="EBI-2548480">
        <id>Q9HA38</id>
    </interactant>
    <interactant intactId="EBI-299649">
        <id>P22626</id>
        <label>HNRNPA2B1</label>
    </interactant>
    <organismsDiffer>false</organismsDiffer>
    <experiments>3</experiments>
</comment>
<comment type="interaction">
    <interactant intactId="EBI-2548480">
        <id>Q9HA38</id>
    </interactant>
    <interactant intactId="EBI-713955">
        <id>O75569</id>
        <label>PRKRA</label>
    </interactant>
    <organismsDiffer>false</organismsDiffer>
    <experiments>3</experiments>
</comment>
<comment type="interaction">
    <interactant intactId="EBI-2548480">
        <id>Q9HA38</id>
    </interactant>
    <interactant intactId="EBI-747107">
        <id>Q8IUQ4</id>
        <label>SIAH1</label>
    </interactant>
    <organismsDiffer>false</organismsDiffer>
    <experiments>3</experiments>
</comment>
<comment type="interaction">
    <interactant intactId="EBI-2548480">
        <id>Q9HA38</id>
    </interactant>
    <interactant intactId="EBI-358174">
        <id>O95793</id>
        <label>STAU1</label>
    </interactant>
    <organismsDiffer>false</organismsDiffer>
    <experiments>3</experiments>
</comment>
<comment type="interaction">
    <interactant intactId="EBI-2548480">
        <id>Q9HA38</id>
    </interactant>
    <interactant intactId="EBI-978581">
        <id>Q15633</id>
        <label>TARBP2</label>
    </interactant>
    <organismsDiffer>false</organismsDiffer>
    <experiments>3</experiments>
</comment>
<comment type="subcellular location">
    <subcellularLocation>
        <location evidence="3">Nucleus</location>
    </subcellularLocation>
    <subcellularLocation>
        <location evidence="3">Nucleus</location>
        <location evidence="3">Nucleolus</location>
    </subcellularLocation>
</comment>
<comment type="alternative products">
    <event type="alternative splicing"/>
    <isoform>
        <id>Q9HA38-1</id>
        <name>1</name>
        <sequence type="displayed"/>
    </isoform>
    <isoform>
        <id>Q9HA38-2</id>
        <name>2</name>
        <sequence type="described" ref="VSP_040093"/>
    </isoform>
</comment>
<comment type="tissue specificity">
    <text evidence="4">Highly expressed in adult brain, and moderately in adult kidney and testis. Not detected in fetal brain, heart, pancreas, adrenal gland, liver or small intestine.</text>
</comment>
<comment type="induction">
    <text evidence="3 4">By DNA damage in a p53/TP53-dependent manner. Up-regulated following ionizing radiation in primary squamous cell carcinoma of the lung and in various colon cancer cell lines.</text>
</comment>
<sequence length="289" mass="32059">MILLQHAVLPPPKQPSPSPPMSVATRSTGTLQLPPQKPFGQEASLPLAGEEELSKGGEQDCALEELCKPLYCKLCNVTLNSAQQAQAHYQGKNHGKKLRNYYAANSCPPPARMSNVVEPAATPVVPVPPQMGSFKPGGRVILATENDYCKLCDASFSSPAVAQAHYQGKNHAKRLRLAEAQSNSFSESSELGQRRARKEGNEFKMMPNRRNMYTVQNNSAGPYFNPRSRQRIPRDLAMCVTPSGQFYCSMCNVGAGEEMEFRQHLESKQHKSKVSEQRYRNEMENLGYV</sequence>
<feature type="chain" id="PRO_0000310779" description="Zinc finger matrin-type protein 3">
    <location>
        <begin position="1"/>
        <end position="289"/>
    </location>
</feature>
<feature type="zinc finger region" description="Matrin-type 1" evidence="1">
    <location>
        <begin position="70"/>
        <end position="100"/>
    </location>
</feature>
<feature type="zinc finger region" description="Matrin-type 2" evidence="1">
    <location>
        <begin position="147"/>
        <end position="177"/>
    </location>
</feature>
<feature type="zinc finger region" description="Matrin-type 3" evidence="1">
    <location>
        <begin position="246"/>
        <end position="276"/>
    </location>
</feature>
<feature type="region of interest" description="Disordered" evidence="2">
    <location>
        <begin position="1"/>
        <end position="42"/>
    </location>
</feature>
<feature type="region of interest" description="Disordered" evidence="2">
    <location>
        <begin position="180"/>
        <end position="201"/>
    </location>
</feature>
<feature type="compositionally biased region" description="Pro residues" evidence="2">
    <location>
        <begin position="9"/>
        <end position="20"/>
    </location>
</feature>
<feature type="compositionally biased region" description="Polar residues" evidence="2">
    <location>
        <begin position="24"/>
        <end position="33"/>
    </location>
</feature>
<feature type="compositionally biased region" description="Polar residues" evidence="2">
    <location>
        <begin position="180"/>
        <end position="191"/>
    </location>
</feature>
<feature type="splice variant" id="VSP_040093" description="In isoform 2." evidence="6 7 8">
    <location>
        <position position="220"/>
    </location>
</feature>
<organism>
    <name type="scientific">Homo sapiens</name>
    <name type="common">Human</name>
    <dbReference type="NCBI Taxonomy" id="9606"/>
    <lineage>
        <taxon>Eukaryota</taxon>
        <taxon>Metazoa</taxon>
        <taxon>Chordata</taxon>
        <taxon>Craniata</taxon>
        <taxon>Vertebrata</taxon>
        <taxon>Euteleostomi</taxon>
        <taxon>Mammalia</taxon>
        <taxon>Eutheria</taxon>
        <taxon>Euarchontoglires</taxon>
        <taxon>Primates</taxon>
        <taxon>Haplorrhini</taxon>
        <taxon>Catarrhini</taxon>
        <taxon>Hominidae</taxon>
        <taxon>Homo</taxon>
    </lineage>
</organism>
<accession>Q9HA38</accession>
<accession>B3KVA6</accession>
<accession>D3DNR1</accession>
<accession>Q96A21</accession>
<protein>
    <recommendedName>
        <fullName>Zinc finger matrin-type protein 3</fullName>
    </recommendedName>
    <alternativeName>
        <fullName>Zinc finger protein WIG-1</fullName>
    </alternativeName>
    <alternativeName>
        <fullName>p53-activated gene 608 protein</fullName>
    </alternativeName>
</protein>
<evidence type="ECO:0000255" key="1"/>
<evidence type="ECO:0000256" key="2">
    <source>
        <dbReference type="SAM" id="MobiDB-lite"/>
    </source>
</evidence>
<evidence type="ECO:0000269" key="3">
    <source>
    </source>
</evidence>
<evidence type="ECO:0000269" key="4">
    <source>
    </source>
</evidence>
<evidence type="ECO:0000269" key="5">
    <source>
    </source>
</evidence>
<evidence type="ECO:0000303" key="6">
    <source>
    </source>
</evidence>
<evidence type="ECO:0000303" key="7">
    <source>
    </source>
</evidence>
<evidence type="ECO:0000303" key="8">
    <source>
    </source>
</evidence>
<evidence type="ECO:0000305" key="9"/>
<evidence type="ECO:0000312" key="10">
    <source>
        <dbReference type="EMBL" id="AAH02896.1"/>
    </source>
</evidence>
<evidence type="ECO:0000312" key="11">
    <source>
        <dbReference type="EMBL" id="AAK71491.1"/>
    </source>
</evidence>
<evidence type="ECO:0000312" key="12">
    <source>
        <dbReference type="EMBL" id="AAK83287.1"/>
    </source>
</evidence>
<evidence type="ECO:0000312" key="13">
    <source>
        <dbReference type="EMBL" id="BAB14020.1"/>
    </source>
</evidence>
<gene>
    <name evidence="10" type="primary">ZMAT3</name>
    <name evidence="12" type="synonym">PAG608</name>
    <name evidence="12" type="synonym">WIG1</name>
</gene>
<proteinExistence type="evidence at protein level"/>
<keyword id="KW-0025">Alternative splicing</keyword>
<keyword id="KW-0053">Apoptosis</keyword>
<keyword id="KW-0227">DNA damage</keyword>
<keyword id="KW-0341">Growth regulation</keyword>
<keyword id="KW-0479">Metal-binding</keyword>
<keyword id="KW-0539">Nucleus</keyword>
<keyword id="KW-0653">Protein transport</keyword>
<keyword id="KW-1267">Proteomics identification</keyword>
<keyword id="KW-1185">Reference proteome</keyword>
<keyword id="KW-0677">Repeat</keyword>
<keyword id="KW-0694">RNA-binding</keyword>
<keyword id="KW-0811">Translocation</keyword>
<keyword id="KW-0813">Transport</keyword>
<keyword id="KW-0862">Zinc</keyword>
<keyword id="KW-0863">Zinc-finger</keyword>
<reference evidence="9 12" key="1">
    <citation type="journal article" date="2001" name="Cancer Lett.">
        <title>Cloning and chromosomal localization of human WIG-1/PAG608 and demonstration of amplification with increased expression in primary squamous cell carcinoma of the lung.</title>
        <authorList>
            <person name="Varmeh-Ziaie S."/>
            <person name="Ichimura K."/>
            <person name="Yang F."/>
            <person name="Rabbits P."/>
            <person name="Collins V.P."/>
        </authorList>
    </citation>
    <scope>NUCLEOTIDE SEQUENCE [MRNA] (ISOFORM 2)</scope>
    <scope>TISSUE SPECIFICITY</scope>
    <scope>INDUCTION</scope>
</reference>
<reference evidence="9 11" key="2">
    <citation type="journal article" date="2001" name="Oncogene">
        <title>Human wig-1, a p53 target gene that encodes a growth inhibitory zinc finger protein.</title>
        <authorList>
            <person name="Hellborg F."/>
            <person name="Qian W."/>
            <person name="Mendez-Vidal C."/>
            <person name="Asker C."/>
            <person name="Kost-Alimova M."/>
            <person name="Wilhelm M."/>
            <person name="Imreh S."/>
            <person name="Wiman K.G."/>
        </authorList>
    </citation>
    <scope>NUCLEOTIDE SEQUENCE [MRNA] (ISOFORM 2)</scope>
    <scope>FUNCTION</scope>
    <scope>SUBCELLULAR LOCATION</scope>
    <scope>INDUCTION</scope>
    <source>
        <tissue evidence="11">Testis</tissue>
    </source>
</reference>
<reference evidence="13" key="3">
    <citation type="journal article" date="2004" name="Nat. Genet.">
        <title>Complete sequencing and characterization of 21,243 full-length human cDNAs.</title>
        <authorList>
            <person name="Ota T."/>
            <person name="Suzuki Y."/>
            <person name="Nishikawa T."/>
            <person name="Otsuki T."/>
            <person name="Sugiyama T."/>
            <person name="Irie R."/>
            <person name="Wakamatsu A."/>
            <person name="Hayashi K."/>
            <person name="Sato H."/>
            <person name="Nagai K."/>
            <person name="Kimura K."/>
            <person name="Makita H."/>
            <person name="Sekine M."/>
            <person name="Obayashi M."/>
            <person name="Nishi T."/>
            <person name="Shibahara T."/>
            <person name="Tanaka T."/>
            <person name="Ishii S."/>
            <person name="Yamamoto J."/>
            <person name="Saito K."/>
            <person name="Kawai Y."/>
            <person name="Isono Y."/>
            <person name="Nakamura Y."/>
            <person name="Nagahari K."/>
            <person name="Murakami K."/>
            <person name="Yasuda T."/>
            <person name="Iwayanagi T."/>
            <person name="Wagatsuma M."/>
            <person name="Shiratori A."/>
            <person name="Sudo H."/>
            <person name="Hosoiri T."/>
            <person name="Kaku Y."/>
            <person name="Kodaira H."/>
            <person name="Kondo H."/>
            <person name="Sugawara M."/>
            <person name="Takahashi M."/>
            <person name="Kanda K."/>
            <person name="Yokoi T."/>
            <person name="Furuya T."/>
            <person name="Kikkawa E."/>
            <person name="Omura Y."/>
            <person name="Abe K."/>
            <person name="Kamihara K."/>
            <person name="Katsuta N."/>
            <person name="Sato K."/>
            <person name="Tanikawa M."/>
            <person name="Yamazaki M."/>
            <person name="Ninomiya K."/>
            <person name="Ishibashi T."/>
            <person name="Yamashita H."/>
            <person name="Murakawa K."/>
            <person name="Fujimori K."/>
            <person name="Tanai H."/>
            <person name="Kimata M."/>
            <person name="Watanabe M."/>
            <person name="Hiraoka S."/>
            <person name="Chiba Y."/>
            <person name="Ishida S."/>
            <person name="Ono Y."/>
            <person name="Takiguchi S."/>
            <person name="Watanabe S."/>
            <person name="Yosida M."/>
            <person name="Hotuta T."/>
            <person name="Kusano J."/>
            <person name="Kanehori K."/>
            <person name="Takahashi-Fujii A."/>
            <person name="Hara H."/>
            <person name="Tanase T.-O."/>
            <person name="Nomura Y."/>
            <person name="Togiya S."/>
            <person name="Komai F."/>
            <person name="Hara R."/>
            <person name="Takeuchi K."/>
            <person name="Arita M."/>
            <person name="Imose N."/>
            <person name="Musashino K."/>
            <person name="Yuuki H."/>
            <person name="Oshima A."/>
            <person name="Sasaki N."/>
            <person name="Aotsuka S."/>
            <person name="Yoshikawa Y."/>
            <person name="Matsunawa H."/>
            <person name="Ichihara T."/>
            <person name="Shiohata N."/>
            <person name="Sano S."/>
            <person name="Moriya S."/>
            <person name="Momiyama H."/>
            <person name="Satoh N."/>
            <person name="Takami S."/>
            <person name="Terashima Y."/>
            <person name="Suzuki O."/>
            <person name="Nakagawa S."/>
            <person name="Senoh A."/>
            <person name="Mizoguchi H."/>
            <person name="Goto Y."/>
            <person name="Shimizu F."/>
            <person name="Wakebe H."/>
            <person name="Hishigaki H."/>
            <person name="Watanabe T."/>
            <person name="Sugiyama A."/>
            <person name="Takemoto M."/>
            <person name="Kawakami B."/>
            <person name="Yamazaki M."/>
            <person name="Watanabe K."/>
            <person name="Kumagai A."/>
            <person name="Itakura S."/>
            <person name="Fukuzumi Y."/>
            <person name="Fujimori Y."/>
            <person name="Komiyama M."/>
            <person name="Tashiro H."/>
            <person name="Tanigami A."/>
            <person name="Fujiwara T."/>
            <person name="Ono T."/>
            <person name="Yamada K."/>
            <person name="Fujii Y."/>
            <person name="Ozaki K."/>
            <person name="Hirao M."/>
            <person name="Ohmori Y."/>
            <person name="Kawabata A."/>
            <person name="Hikiji T."/>
            <person name="Kobatake N."/>
            <person name="Inagaki H."/>
            <person name="Ikema Y."/>
            <person name="Okamoto S."/>
            <person name="Okitani R."/>
            <person name="Kawakami T."/>
            <person name="Noguchi S."/>
            <person name="Itoh T."/>
            <person name="Shigeta K."/>
            <person name="Senba T."/>
            <person name="Matsumura K."/>
            <person name="Nakajima Y."/>
            <person name="Mizuno T."/>
            <person name="Morinaga M."/>
            <person name="Sasaki M."/>
            <person name="Togashi T."/>
            <person name="Oyama M."/>
            <person name="Hata H."/>
            <person name="Watanabe M."/>
            <person name="Komatsu T."/>
            <person name="Mizushima-Sugano J."/>
            <person name="Satoh T."/>
            <person name="Shirai Y."/>
            <person name="Takahashi Y."/>
            <person name="Nakagawa K."/>
            <person name="Okumura K."/>
            <person name="Nagase T."/>
            <person name="Nomura N."/>
            <person name="Kikuchi H."/>
            <person name="Masuho Y."/>
            <person name="Yamashita R."/>
            <person name="Nakai K."/>
            <person name="Yada T."/>
            <person name="Nakamura Y."/>
            <person name="Ohara O."/>
            <person name="Isogai T."/>
            <person name="Sugano S."/>
        </authorList>
    </citation>
    <scope>NUCLEOTIDE SEQUENCE [LARGE SCALE MRNA] (ISOFORMS 1 AND 2)</scope>
    <source>
        <tissue evidence="13">Mammary gland</tissue>
    </source>
</reference>
<reference key="4">
    <citation type="journal article" date="2006" name="Nature">
        <title>The DNA sequence, annotation and analysis of human chromosome 3.</title>
        <authorList>
            <person name="Muzny D.M."/>
            <person name="Scherer S.E."/>
            <person name="Kaul R."/>
            <person name="Wang J."/>
            <person name="Yu J."/>
            <person name="Sudbrak R."/>
            <person name="Buhay C.J."/>
            <person name="Chen R."/>
            <person name="Cree A."/>
            <person name="Ding Y."/>
            <person name="Dugan-Rocha S."/>
            <person name="Gill R."/>
            <person name="Gunaratne P."/>
            <person name="Harris R.A."/>
            <person name="Hawes A.C."/>
            <person name="Hernandez J."/>
            <person name="Hodgson A.V."/>
            <person name="Hume J."/>
            <person name="Jackson A."/>
            <person name="Khan Z.M."/>
            <person name="Kovar-Smith C."/>
            <person name="Lewis L.R."/>
            <person name="Lozado R.J."/>
            <person name="Metzker M.L."/>
            <person name="Milosavljevic A."/>
            <person name="Miner G.R."/>
            <person name="Morgan M.B."/>
            <person name="Nazareth L.V."/>
            <person name="Scott G."/>
            <person name="Sodergren E."/>
            <person name="Song X.-Z."/>
            <person name="Steffen D."/>
            <person name="Wei S."/>
            <person name="Wheeler D.A."/>
            <person name="Wright M.W."/>
            <person name="Worley K.C."/>
            <person name="Yuan Y."/>
            <person name="Zhang Z."/>
            <person name="Adams C.Q."/>
            <person name="Ansari-Lari M.A."/>
            <person name="Ayele M."/>
            <person name="Brown M.J."/>
            <person name="Chen G."/>
            <person name="Chen Z."/>
            <person name="Clendenning J."/>
            <person name="Clerc-Blankenburg K.P."/>
            <person name="Chen R."/>
            <person name="Chen Z."/>
            <person name="Davis C."/>
            <person name="Delgado O."/>
            <person name="Dinh H.H."/>
            <person name="Dong W."/>
            <person name="Draper H."/>
            <person name="Ernst S."/>
            <person name="Fu G."/>
            <person name="Gonzalez-Garay M.L."/>
            <person name="Garcia D.K."/>
            <person name="Gillett W."/>
            <person name="Gu J."/>
            <person name="Hao B."/>
            <person name="Haugen E."/>
            <person name="Havlak P."/>
            <person name="He X."/>
            <person name="Hennig S."/>
            <person name="Hu S."/>
            <person name="Huang W."/>
            <person name="Jackson L.R."/>
            <person name="Jacob L.S."/>
            <person name="Kelly S.H."/>
            <person name="Kube M."/>
            <person name="Levy R."/>
            <person name="Li Z."/>
            <person name="Liu B."/>
            <person name="Liu J."/>
            <person name="Liu W."/>
            <person name="Lu J."/>
            <person name="Maheshwari M."/>
            <person name="Nguyen B.-V."/>
            <person name="Okwuonu G.O."/>
            <person name="Palmeiri A."/>
            <person name="Pasternak S."/>
            <person name="Perez L.M."/>
            <person name="Phelps K.A."/>
            <person name="Plopper F.J."/>
            <person name="Qiang B."/>
            <person name="Raymond C."/>
            <person name="Rodriguez R."/>
            <person name="Saenphimmachak C."/>
            <person name="Santibanez J."/>
            <person name="Shen H."/>
            <person name="Shen Y."/>
            <person name="Subramanian S."/>
            <person name="Tabor P.E."/>
            <person name="Verduzco D."/>
            <person name="Waldron L."/>
            <person name="Wang J."/>
            <person name="Wang J."/>
            <person name="Wang Q."/>
            <person name="Williams G.A."/>
            <person name="Wong G.K.-S."/>
            <person name="Yao Z."/>
            <person name="Zhang J."/>
            <person name="Zhang X."/>
            <person name="Zhao G."/>
            <person name="Zhou J."/>
            <person name="Zhou Y."/>
            <person name="Nelson D."/>
            <person name="Lehrach H."/>
            <person name="Reinhardt R."/>
            <person name="Naylor S.L."/>
            <person name="Yang H."/>
            <person name="Olson M."/>
            <person name="Weinstock G."/>
            <person name="Gibbs R.A."/>
        </authorList>
    </citation>
    <scope>NUCLEOTIDE SEQUENCE [LARGE SCALE GENOMIC DNA]</scope>
</reference>
<reference key="5">
    <citation type="submission" date="2005-09" db="EMBL/GenBank/DDBJ databases">
        <authorList>
            <person name="Mural R.J."/>
            <person name="Istrail S."/>
            <person name="Sutton G.G."/>
            <person name="Florea L."/>
            <person name="Halpern A.L."/>
            <person name="Mobarry C.M."/>
            <person name="Lippert R."/>
            <person name="Walenz B."/>
            <person name="Shatkay H."/>
            <person name="Dew I."/>
            <person name="Miller J.R."/>
            <person name="Flanigan M.J."/>
            <person name="Edwards N.J."/>
            <person name="Bolanos R."/>
            <person name="Fasulo D."/>
            <person name="Halldorsson B.V."/>
            <person name="Hannenhalli S."/>
            <person name="Turner R."/>
            <person name="Yooseph S."/>
            <person name="Lu F."/>
            <person name="Nusskern D.R."/>
            <person name="Shue B.C."/>
            <person name="Zheng X.H."/>
            <person name="Zhong F."/>
            <person name="Delcher A.L."/>
            <person name="Huson D.H."/>
            <person name="Kravitz S.A."/>
            <person name="Mouchard L."/>
            <person name="Reinert K."/>
            <person name="Remington K.A."/>
            <person name="Clark A.G."/>
            <person name="Waterman M.S."/>
            <person name="Eichler E.E."/>
            <person name="Adams M.D."/>
            <person name="Hunkapiller M.W."/>
            <person name="Myers E.W."/>
            <person name="Venter J.C."/>
        </authorList>
    </citation>
    <scope>NUCLEOTIDE SEQUENCE [LARGE SCALE GENOMIC DNA]</scope>
</reference>
<reference evidence="10" key="6">
    <citation type="journal article" date="2004" name="Genome Res.">
        <title>The status, quality, and expansion of the NIH full-length cDNA project: the Mammalian Gene Collection (MGC).</title>
        <authorList>
            <consortium name="The MGC Project Team"/>
        </authorList>
    </citation>
    <scope>NUCLEOTIDE SEQUENCE [LARGE SCALE MRNA] (ISOFORM 1)</scope>
    <source>
        <tissue evidence="10">Lung carcinoma</tissue>
    </source>
</reference>
<reference evidence="9" key="7">
    <citation type="journal article" date="2006" name="FEBS Lett.">
        <title>The p53-induced Wig-1 protein binds double-stranded RNAs with structural characteristics of siRNAs and miRNAs.</title>
        <authorList>
            <person name="Mendez Vidal C."/>
            <person name="Prahl M."/>
            <person name="Wiman K.G."/>
        </authorList>
    </citation>
    <scope>SUBUNIT</scope>
</reference>
<name>ZMAT3_HUMAN</name>